<accession>A6VCK3</accession>
<keyword id="KW-0963">Cytoplasm</keyword>
<keyword id="KW-0690">Ribosome biogenesis</keyword>
<feature type="chain" id="PRO_1000064748" description="Ribosome maturation factor RimP">
    <location>
        <begin position="1"/>
        <end position="152"/>
    </location>
</feature>
<sequence>MSSKLEQLQALLAPVVEALGYECWGVEFISQGRHSVLRVYIDRPEGILIDDCEAVSRQVSGILDVEDPISGEYTLEVSSPGMDRPLFTLEQFAKHAGEQVKIRLRSPYEGRRNYQGILRGVEEQDVVVLVDDHEYLLPIDSIDKANIIPRFD</sequence>
<reference key="1">
    <citation type="submission" date="2007-06" db="EMBL/GenBank/DDBJ databases">
        <authorList>
            <person name="Dodson R.J."/>
            <person name="Harkins D."/>
            <person name="Paulsen I.T."/>
        </authorList>
    </citation>
    <scope>NUCLEOTIDE SEQUENCE [LARGE SCALE GENOMIC DNA]</scope>
    <source>
        <strain>DSM 24068 / PA7</strain>
    </source>
</reference>
<name>RIMP_PSEP7</name>
<protein>
    <recommendedName>
        <fullName evidence="1">Ribosome maturation factor RimP</fullName>
    </recommendedName>
</protein>
<organism>
    <name type="scientific">Pseudomonas paraeruginosa (strain DSM 24068 / PA7)</name>
    <name type="common">Pseudomonas aeruginosa (strain PA7)</name>
    <dbReference type="NCBI Taxonomy" id="381754"/>
    <lineage>
        <taxon>Bacteria</taxon>
        <taxon>Pseudomonadati</taxon>
        <taxon>Pseudomonadota</taxon>
        <taxon>Gammaproteobacteria</taxon>
        <taxon>Pseudomonadales</taxon>
        <taxon>Pseudomonadaceae</taxon>
        <taxon>Pseudomonas</taxon>
        <taxon>Pseudomonas paraeruginosa</taxon>
    </lineage>
</organism>
<comment type="function">
    <text evidence="1">Required for maturation of 30S ribosomal subunits.</text>
</comment>
<comment type="subcellular location">
    <subcellularLocation>
        <location evidence="1">Cytoplasm</location>
    </subcellularLocation>
</comment>
<comment type="similarity">
    <text evidence="1">Belongs to the RimP family.</text>
</comment>
<gene>
    <name evidence="1" type="primary">rimP</name>
    <name type="ordered locus">PSPA7_5464</name>
</gene>
<evidence type="ECO:0000255" key="1">
    <source>
        <dbReference type="HAMAP-Rule" id="MF_01077"/>
    </source>
</evidence>
<proteinExistence type="inferred from homology"/>
<dbReference type="EMBL" id="CP000744">
    <property type="protein sequence ID" value="ABR83629.1"/>
    <property type="molecule type" value="Genomic_DNA"/>
</dbReference>
<dbReference type="RefSeq" id="WP_003095193.1">
    <property type="nucleotide sequence ID" value="NC_009656.1"/>
</dbReference>
<dbReference type="SMR" id="A6VCK3"/>
<dbReference type="GeneID" id="77223281"/>
<dbReference type="KEGG" id="pap:PSPA7_5464"/>
<dbReference type="HOGENOM" id="CLU_070525_1_1_6"/>
<dbReference type="Proteomes" id="UP000001582">
    <property type="component" value="Chromosome"/>
</dbReference>
<dbReference type="GO" id="GO:0005829">
    <property type="term" value="C:cytosol"/>
    <property type="evidence" value="ECO:0007669"/>
    <property type="project" value="TreeGrafter"/>
</dbReference>
<dbReference type="GO" id="GO:0000028">
    <property type="term" value="P:ribosomal small subunit assembly"/>
    <property type="evidence" value="ECO:0007669"/>
    <property type="project" value="TreeGrafter"/>
</dbReference>
<dbReference type="GO" id="GO:0006412">
    <property type="term" value="P:translation"/>
    <property type="evidence" value="ECO:0007669"/>
    <property type="project" value="TreeGrafter"/>
</dbReference>
<dbReference type="CDD" id="cd01734">
    <property type="entry name" value="YlxS_C"/>
    <property type="match status" value="1"/>
</dbReference>
<dbReference type="FunFam" id="2.30.30.180:FF:000004">
    <property type="entry name" value="Ribosome maturation factor RimP"/>
    <property type="match status" value="1"/>
</dbReference>
<dbReference type="FunFam" id="3.30.300.70:FF:000001">
    <property type="entry name" value="Ribosome maturation factor RimP"/>
    <property type="match status" value="1"/>
</dbReference>
<dbReference type="Gene3D" id="2.30.30.180">
    <property type="entry name" value="Ribosome maturation factor RimP, C-terminal domain"/>
    <property type="match status" value="1"/>
</dbReference>
<dbReference type="Gene3D" id="3.30.300.70">
    <property type="entry name" value="RimP-like superfamily, N-terminal"/>
    <property type="match status" value="1"/>
</dbReference>
<dbReference type="HAMAP" id="MF_01077">
    <property type="entry name" value="RimP"/>
    <property type="match status" value="1"/>
</dbReference>
<dbReference type="InterPro" id="IPR003728">
    <property type="entry name" value="Ribosome_maturation_RimP"/>
</dbReference>
<dbReference type="InterPro" id="IPR028998">
    <property type="entry name" value="RimP_C"/>
</dbReference>
<dbReference type="InterPro" id="IPR036847">
    <property type="entry name" value="RimP_C_sf"/>
</dbReference>
<dbReference type="InterPro" id="IPR028989">
    <property type="entry name" value="RimP_N"/>
</dbReference>
<dbReference type="InterPro" id="IPR035956">
    <property type="entry name" value="RimP_N_sf"/>
</dbReference>
<dbReference type="NCBIfam" id="NF000927">
    <property type="entry name" value="PRK00092.1-1"/>
    <property type="match status" value="1"/>
</dbReference>
<dbReference type="PANTHER" id="PTHR33867">
    <property type="entry name" value="RIBOSOME MATURATION FACTOR RIMP"/>
    <property type="match status" value="1"/>
</dbReference>
<dbReference type="PANTHER" id="PTHR33867:SF1">
    <property type="entry name" value="RIBOSOME MATURATION FACTOR RIMP"/>
    <property type="match status" value="1"/>
</dbReference>
<dbReference type="Pfam" id="PF17384">
    <property type="entry name" value="DUF150_C"/>
    <property type="match status" value="1"/>
</dbReference>
<dbReference type="Pfam" id="PF02576">
    <property type="entry name" value="RimP_N"/>
    <property type="match status" value="1"/>
</dbReference>
<dbReference type="SUPFAM" id="SSF74942">
    <property type="entry name" value="YhbC-like, C-terminal domain"/>
    <property type="match status" value="1"/>
</dbReference>
<dbReference type="SUPFAM" id="SSF75420">
    <property type="entry name" value="YhbC-like, N-terminal domain"/>
    <property type="match status" value="1"/>
</dbReference>